<comment type="function">
    <text evidence="1">Probably participates in a plant defense mechanism.</text>
</comment>
<comment type="domain">
    <text evidence="4">The presence of a 'disulfide through disulfide knot' structurally defines this protein as a knottin.</text>
</comment>
<comment type="PTM">
    <text evidence="1">This is a cyclic peptide.</text>
</comment>
<comment type="similarity">
    <text evidence="1">Belongs to the cyclotide family.</text>
</comment>
<comment type="caution">
    <text evidence="1">This peptide is cyclic. The start position was chosen by similarity to Oak1 (kalata B1) for which the DNA sequence is known.</text>
</comment>
<dbReference type="SMR" id="C0HKI8"/>
<dbReference type="GO" id="GO:0006952">
    <property type="term" value="P:defense response"/>
    <property type="evidence" value="ECO:0007669"/>
    <property type="project" value="UniProtKB-KW"/>
</dbReference>
<dbReference type="InterPro" id="IPR005535">
    <property type="entry name" value="Cyclotide"/>
</dbReference>
<dbReference type="InterPro" id="IPR036146">
    <property type="entry name" value="Cyclotide_sf"/>
</dbReference>
<dbReference type="Pfam" id="PF03784">
    <property type="entry name" value="Cyclotide"/>
    <property type="match status" value="1"/>
</dbReference>
<dbReference type="PIRSF" id="PIRSF037891">
    <property type="entry name" value="Cycloviolacin"/>
    <property type="match status" value="1"/>
</dbReference>
<dbReference type="SUPFAM" id="SSF57038">
    <property type="entry name" value="Cyclotides"/>
    <property type="match status" value="1"/>
</dbReference>
<dbReference type="PROSITE" id="PS51052">
    <property type="entry name" value="CYCLOTIDE"/>
    <property type="match status" value="1"/>
</dbReference>
<proteinExistence type="evidence at protein level"/>
<name>CYMEF_MELDN</name>
<accession>C0HKI8</accession>
<evidence type="ECO:0000255" key="1">
    <source>
        <dbReference type="PROSITE-ProRule" id="PRU00395"/>
    </source>
</evidence>
<evidence type="ECO:0000269" key="2">
    <source>
    </source>
</evidence>
<evidence type="ECO:0000303" key="3">
    <source>
    </source>
</evidence>
<evidence type="ECO:0000305" key="4"/>
<feature type="peptide" id="PRO_0000441365" description="Cyclotide mden-F" evidence="2">
    <location>
        <begin position="1"/>
        <end position="29"/>
    </location>
</feature>
<feature type="disulfide bond" evidence="1">
    <location>
        <begin position="5"/>
        <end position="19"/>
    </location>
</feature>
<feature type="disulfide bond" evidence="1">
    <location>
        <begin position="9"/>
        <end position="21"/>
    </location>
</feature>
<feature type="disulfide bond" evidence="1">
    <location>
        <begin position="14"/>
        <end position="26"/>
    </location>
</feature>
<feature type="cross-link" description="Cyclopeptide (Gly-Asn)" evidence="3">
    <location>
        <begin position="1"/>
        <end position="29"/>
    </location>
</feature>
<reference evidence="4" key="1">
    <citation type="journal article" date="2017" name="J. Nat. Prod.">
        <title>Understanding the Diversity and Distribution of Cyclotides from Plants of Varied Genetic Origin.</title>
        <authorList>
            <person name="Ravipati A.S."/>
            <person name="Poth A.G."/>
            <person name="Troeira Henriques S."/>
            <person name="Bhandari M."/>
            <person name="Huang Y.H."/>
            <person name="Nino J."/>
            <person name="Colgrave M.L."/>
            <person name="Craik D.J."/>
        </authorList>
    </citation>
    <scope>PROTEIN SEQUENCE</scope>
</reference>
<organism evidence="3">
    <name type="scientific">Melicytus dentatus</name>
    <name type="common">Tree violet</name>
    <dbReference type="NCBI Taxonomy" id="491106"/>
    <lineage>
        <taxon>Eukaryota</taxon>
        <taxon>Viridiplantae</taxon>
        <taxon>Streptophyta</taxon>
        <taxon>Embryophyta</taxon>
        <taxon>Tracheophyta</taxon>
        <taxon>Spermatophyta</taxon>
        <taxon>Magnoliopsida</taxon>
        <taxon>eudicotyledons</taxon>
        <taxon>Gunneridae</taxon>
        <taxon>Pentapetalae</taxon>
        <taxon>rosids</taxon>
        <taxon>fabids</taxon>
        <taxon>Malpighiales</taxon>
        <taxon>Violaceae</taxon>
        <taxon>Melicytus</taxon>
    </lineage>
</organism>
<sequence length="29" mass="3169">GLPICGETCFFGKCNTPKCTCINPICYKN</sequence>
<protein>
    <recommendedName>
        <fullName evidence="3">Cyclotide mden-F</fullName>
    </recommendedName>
</protein>
<keyword id="KW-0903">Direct protein sequencing</keyword>
<keyword id="KW-1015">Disulfide bond</keyword>
<keyword id="KW-0611">Plant defense</keyword>